<name>RL7_CHLPN</name>
<gene>
    <name evidence="2" type="primary">rplL</name>
    <name type="synonym">rl7</name>
    <name type="ordered locus">CPn_0080</name>
    <name type="ordered locus">CP_0695</name>
    <name type="ordered locus">CpB0080</name>
</gene>
<reference key="1">
    <citation type="journal article" date="1999" name="Nat. Genet.">
        <title>Comparative genomes of Chlamydia pneumoniae and C. trachomatis.</title>
        <authorList>
            <person name="Kalman S."/>
            <person name="Mitchell W.P."/>
            <person name="Marathe R."/>
            <person name="Lammel C.J."/>
            <person name="Fan J."/>
            <person name="Hyman R.W."/>
            <person name="Olinger L."/>
            <person name="Grimwood J."/>
            <person name="Davis R.W."/>
            <person name="Stephens R.S."/>
        </authorList>
    </citation>
    <scope>NUCLEOTIDE SEQUENCE [LARGE SCALE GENOMIC DNA]</scope>
    <source>
        <strain>CWL029</strain>
    </source>
</reference>
<reference key="2">
    <citation type="journal article" date="2000" name="Nucleic Acids Res.">
        <title>Genome sequences of Chlamydia trachomatis MoPn and Chlamydia pneumoniae AR39.</title>
        <authorList>
            <person name="Read T.D."/>
            <person name="Brunham R.C."/>
            <person name="Shen C."/>
            <person name="Gill S.R."/>
            <person name="Heidelberg J.F."/>
            <person name="White O."/>
            <person name="Hickey E.K."/>
            <person name="Peterson J.D."/>
            <person name="Utterback T.R."/>
            <person name="Berry K.J."/>
            <person name="Bass S."/>
            <person name="Linher K.D."/>
            <person name="Weidman J.F."/>
            <person name="Khouri H.M."/>
            <person name="Craven B."/>
            <person name="Bowman C."/>
            <person name="Dodson R.J."/>
            <person name="Gwinn M.L."/>
            <person name="Nelson W.C."/>
            <person name="DeBoy R.T."/>
            <person name="Kolonay J.F."/>
            <person name="McClarty G."/>
            <person name="Salzberg S.L."/>
            <person name="Eisen J.A."/>
            <person name="Fraser C.M."/>
        </authorList>
    </citation>
    <scope>NUCLEOTIDE SEQUENCE [LARGE SCALE GENOMIC DNA]</scope>
    <source>
        <strain>AR39</strain>
    </source>
</reference>
<reference key="3">
    <citation type="journal article" date="2000" name="Nucleic Acids Res.">
        <title>Comparison of whole genome sequences of Chlamydia pneumoniae J138 from Japan and CWL029 from USA.</title>
        <authorList>
            <person name="Shirai M."/>
            <person name="Hirakawa H."/>
            <person name="Kimoto M."/>
            <person name="Tabuchi M."/>
            <person name="Kishi F."/>
            <person name="Ouchi K."/>
            <person name="Shiba T."/>
            <person name="Ishii K."/>
            <person name="Hattori M."/>
            <person name="Kuhara S."/>
            <person name="Nakazawa T."/>
        </authorList>
    </citation>
    <scope>NUCLEOTIDE SEQUENCE [LARGE SCALE GENOMIC DNA]</scope>
    <source>
        <strain>J138</strain>
    </source>
</reference>
<reference key="4">
    <citation type="submission" date="2002-05" db="EMBL/GenBank/DDBJ databases">
        <title>The genome sequence of Chlamydia pneumoniae TW183 and comparison with other Chlamydia strains based on whole genome sequence analysis.</title>
        <authorList>
            <person name="Geng M.M."/>
            <person name="Schuhmacher A."/>
            <person name="Muehldorfer I."/>
            <person name="Bensch K.W."/>
            <person name="Schaefer K.P."/>
            <person name="Schneider S."/>
            <person name="Pohl T."/>
            <person name="Essig A."/>
            <person name="Marre R."/>
            <person name="Melchers K."/>
        </authorList>
    </citation>
    <scope>NUCLEOTIDE SEQUENCE [LARGE SCALE GENOMIC DNA]</scope>
    <source>
        <strain>TW-183</strain>
    </source>
</reference>
<protein>
    <recommendedName>
        <fullName evidence="2">Large ribosomal subunit protein bL12</fullName>
    </recommendedName>
    <alternativeName>
        <fullName evidence="4">50S ribosomal protein L7/L12</fullName>
    </alternativeName>
</protein>
<proteinExistence type="inferred from homology"/>
<accession>Q9Z9A1</accession>
<accession>Q9JQ70</accession>
<sequence>MTTESLETLVEKLSNLTVLELSQLKKLLEEKWDVTASAPVVAVAAGGGGEAPVAAEPTEFAVTLEDVPADKKIGVLKVVREVTGLALKEAKEMTEGLPKTVKEKTSKSDAEDTVKKLQDAGAKASFKGL</sequence>
<feature type="initiator methionine" description="Removed" evidence="1">
    <location>
        <position position="1"/>
    </location>
</feature>
<feature type="chain" id="PRO_0000157518" description="Large ribosomal subunit protein bL12">
    <location>
        <begin position="2"/>
        <end position="129"/>
    </location>
</feature>
<feature type="region of interest" description="Disordered" evidence="3">
    <location>
        <begin position="94"/>
        <end position="113"/>
    </location>
</feature>
<evidence type="ECO:0000250" key="1"/>
<evidence type="ECO:0000255" key="2">
    <source>
        <dbReference type="HAMAP-Rule" id="MF_00368"/>
    </source>
</evidence>
<evidence type="ECO:0000256" key="3">
    <source>
        <dbReference type="SAM" id="MobiDB-lite"/>
    </source>
</evidence>
<evidence type="ECO:0000305" key="4"/>
<dbReference type="EMBL" id="AE001363">
    <property type="protein sequence ID" value="AAD18233.1"/>
    <property type="molecule type" value="Genomic_DNA"/>
</dbReference>
<dbReference type="EMBL" id="AE002161">
    <property type="protein sequence ID" value="AAF38503.1"/>
    <property type="molecule type" value="Genomic_DNA"/>
</dbReference>
<dbReference type="EMBL" id="BA000008">
    <property type="protein sequence ID" value="BAA98290.1"/>
    <property type="molecule type" value="Genomic_DNA"/>
</dbReference>
<dbReference type="EMBL" id="AE009440">
    <property type="protein sequence ID" value="AAP98013.1"/>
    <property type="molecule type" value="Genomic_DNA"/>
</dbReference>
<dbReference type="PIR" id="C72122">
    <property type="entry name" value="C72122"/>
</dbReference>
<dbReference type="PIR" id="H86500">
    <property type="entry name" value="H86500"/>
</dbReference>
<dbReference type="RefSeq" id="NP_224288.1">
    <property type="nucleotide sequence ID" value="NC_000922.1"/>
</dbReference>
<dbReference type="RefSeq" id="WP_010882730.1">
    <property type="nucleotide sequence ID" value="NZ_LN847257.1"/>
</dbReference>
<dbReference type="SMR" id="Q9Z9A1"/>
<dbReference type="STRING" id="406984.CPK_ORF00589"/>
<dbReference type="GeneID" id="45050125"/>
<dbReference type="KEGG" id="cpa:CP_0695"/>
<dbReference type="KEGG" id="cpj:rl7"/>
<dbReference type="KEGG" id="cpn:CPn_0080"/>
<dbReference type="KEGG" id="cpt:CpB0080"/>
<dbReference type="PATRIC" id="fig|115713.3.peg.91"/>
<dbReference type="eggNOG" id="COG0222">
    <property type="taxonomic scope" value="Bacteria"/>
</dbReference>
<dbReference type="HOGENOM" id="CLU_086499_3_0_0"/>
<dbReference type="OMA" id="LEDKWGV"/>
<dbReference type="OrthoDB" id="9811748at2"/>
<dbReference type="Proteomes" id="UP000000583">
    <property type="component" value="Chromosome"/>
</dbReference>
<dbReference type="Proteomes" id="UP000000801">
    <property type="component" value="Chromosome"/>
</dbReference>
<dbReference type="GO" id="GO:0022625">
    <property type="term" value="C:cytosolic large ribosomal subunit"/>
    <property type="evidence" value="ECO:0007669"/>
    <property type="project" value="TreeGrafter"/>
</dbReference>
<dbReference type="GO" id="GO:0003729">
    <property type="term" value="F:mRNA binding"/>
    <property type="evidence" value="ECO:0007669"/>
    <property type="project" value="TreeGrafter"/>
</dbReference>
<dbReference type="GO" id="GO:0003735">
    <property type="term" value="F:structural constituent of ribosome"/>
    <property type="evidence" value="ECO:0007669"/>
    <property type="project" value="InterPro"/>
</dbReference>
<dbReference type="GO" id="GO:0006412">
    <property type="term" value="P:translation"/>
    <property type="evidence" value="ECO:0007669"/>
    <property type="project" value="UniProtKB-UniRule"/>
</dbReference>
<dbReference type="CDD" id="cd00387">
    <property type="entry name" value="Ribosomal_L7_L12"/>
    <property type="match status" value="1"/>
</dbReference>
<dbReference type="FunFam" id="3.30.1390.10:FF:000001">
    <property type="entry name" value="50S ribosomal protein L7/L12"/>
    <property type="match status" value="1"/>
</dbReference>
<dbReference type="Gene3D" id="3.30.1390.10">
    <property type="match status" value="1"/>
</dbReference>
<dbReference type="Gene3D" id="1.20.5.710">
    <property type="entry name" value="Single helix bin"/>
    <property type="match status" value="1"/>
</dbReference>
<dbReference type="HAMAP" id="MF_00368">
    <property type="entry name" value="Ribosomal_bL12"/>
    <property type="match status" value="1"/>
</dbReference>
<dbReference type="InterPro" id="IPR000206">
    <property type="entry name" value="Ribosomal_bL12"/>
</dbReference>
<dbReference type="InterPro" id="IPR013823">
    <property type="entry name" value="Ribosomal_bL12_C"/>
</dbReference>
<dbReference type="InterPro" id="IPR014719">
    <property type="entry name" value="Ribosomal_bL12_C/ClpS-like"/>
</dbReference>
<dbReference type="InterPro" id="IPR008932">
    <property type="entry name" value="Ribosomal_bL12_oligo"/>
</dbReference>
<dbReference type="InterPro" id="IPR036235">
    <property type="entry name" value="Ribosomal_bL12_oligo_N_sf"/>
</dbReference>
<dbReference type="NCBIfam" id="TIGR00855">
    <property type="entry name" value="L12"/>
    <property type="match status" value="1"/>
</dbReference>
<dbReference type="PANTHER" id="PTHR45987">
    <property type="entry name" value="39S RIBOSOMAL PROTEIN L12"/>
    <property type="match status" value="1"/>
</dbReference>
<dbReference type="PANTHER" id="PTHR45987:SF4">
    <property type="entry name" value="LARGE RIBOSOMAL SUBUNIT PROTEIN BL12M"/>
    <property type="match status" value="1"/>
</dbReference>
<dbReference type="Pfam" id="PF00542">
    <property type="entry name" value="Ribosomal_L12"/>
    <property type="match status" value="1"/>
</dbReference>
<dbReference type="Pfam" id="PF16320">
    <property type="entry name" value="Ribosomal_L12_N"/>
    <property type="match status" value="1"/>
</dbReference>
<dbReference type="SUPFAM" id="SSF54736">
    <property type="entry name" value="ClpS-like"/>
    <property type="match status" value="1"/>
</dbReference>
<dbReference type="SUPFAM" id="SSF48300">
    <property type="entry name" value="Ribosomal protein L7/12, oligomerisation (N-terminal) domain"/>
    <property type="match status" value="1"/>
</dbReference>
<organism>
    <name type="scientific">Chlamydia pneumoniae</name>
    <name type="common">Chlamydophila pneumoniae</name>
    <dbReference type="NCBI Taxonomy" id="83558"/>
    <lineage>
        <taxon>Bacteria</taxon>
        <taxon>Pseudomonadati</taxon>
        <taxon>Chlamydiota</taxon>
        <taxon>Chlamydiia</taxon>
        <taxon>Chlamydiales</taxon>
        <taxon>Chlamydiaceae</taxon>
        <taxon>Chlamydia/Chlamydophila group</taxon>
        <taxon>Chlamydia</taxon>
    </lineage>
</organism>
<comment type="function">
    <text evidence="2">Forms part of the ribosomal stalk which helps the ribosome interact with GTP-bound translation factors. Is thus essential for accurate translation.</text>
</comment>
<comment type="subunit">
    <text evidence="2">Homodimer. Part of the ribosomal stalk of the 50S ribosomal subunit. Forms a multimeric L10(L12)X complex, where L10 forms an elongated spine to which 2 to 4 L12 dimers bind in a sequential fashion. Binds GTP-bound translation factors.</text>
</comment>
<comment type="similarity">
    <text evidence="2">Belongs to the bacterial ribosomal protein bL12 family.</text>
</comment>
<keyword id="KW-0687">Ribonucleoprotein</keyword>
<keyword id="KW-0689">Ribosomal protein</keyword>